<proteinExistence type="evidence at transcript level"/>
<gene>
    <name type="primary">PpY-55A</name>
    <name type="synonym">PpD19</name>
    <name type="synonym">PPY</name>
    <name type="ORF">CG10930</name>
</gene>
<sequence length="314" mass="35980">MAVLTTHEIDCIIKELTSLNGSECTLKEELIERLIQQTREVIKWQPMLLELQAPVNICGDIHGQFTDLLRIFKACGFPPKANYLFLGDYVDRGKQSLETICLLFAYKVKYPLNFFLLRGNHESASINKIYGFYDEIKRRHTVRLWHSFTDCFNWLPVAALVGERIFCCHGGLSPSLRNLQQINHIQRPTDIPDEGIMCDLLWADLNHTTKGWGHNDRGVSFTFDKVIVRDFLKAFDLQLMVRAHEVVEDGYEFFANRQLVTVFSAPNYCGMMNNAGGVMSVSTDLICSFVIILPCHKYKMIATDANQMPTNEEE</sequence>
<dbReference type="EC" id="3.1.3.16"/>
<dbReference type="EMBL" id="Y07510">
    <property type="protein sequence ID" value="CAA68808.1"/>
    <property type="molecule type" value="mRNA"/>
</dbReference>
<dbReference type="EMBL" id="AE013599">
    <property type="protein sequence ID" value="AAF57771.1"/>
    <property type="molecule type" value="Genomic_DNA"/>
</dbReference>
<dbReference type="EMBL" id="AY075165">
    <property type="protein sequence ID" value="AAL68035.1"/>
    <property type="molecule type" value="mRNA"/>
</dbReference>
<dbReference type="EMBL" id="S40001">
    <property type="protein sequence ID" value="AAB22467.1"/>
    <property type="molecule type" value="Genomic_DNA"/>
</dbReference>
<dbReference type="PIR" id="S03963">
    <property type="entry name" value="PAFFY"/>
</dbReference>
<dbReference type="RefSeq" id="NP_001286554.1">
    <property type="nucleotide sequence ID" value="NM_001299625.1"/>
</dbReference>
<dbReference type="RefSeq" id="NP_476689.1">
    <property type="nucleotide sequence ID" value="NM_057341.4"/>
</dbReference>
<dbReference type="SMR" id="P11612"/>
<dbReference type="BioGRID" id="71474">
    <property type="interactions" value="1"/>
</dbReference>
<dbReference type="FunCoup" id="P11612">
    <property type="interactions" value="81"/>
</dbReference>
<dbReference type="STRING" id="7227.FBpp0085996"/>
<dbReference type="PaxDb" id="7227-FBpp0085996"/>
<dbReference type="DNASU" id="48532"/>
<dbReference type="EnsemblMetazoa" id="FBtr0086817">
    <property type="protein sequence ID" value="FBpp0085996"/>
    <property type="gene ID" value="FBgn0003140"/>
</dbReference>
<dbReference type="EnsemblMetazoa" id="FBtr0344898">
    <property type="protein sequence ID" value="FBpp0311209"/>
    <property type="gene ID" value="FBgn0003140"/>
</dbReference>
<dbReference type="GeneID" id="48532"/>
<dbReference type="KEGG" id="dme:Dmel_CG10930"/>
<dbReference type="AGR" id="FB:FBgn0003140"/>
<dbReference type="CTD" id="48532"/>
<dbReference type="FlyBase" id="FBgn0003140">
    <property type="gene designation" value="PpY-55A"/>
</dbReference>
<dbReference type="VEuPathDB" id="VectorBase:FBgn0003140"/>
<dbReference type="eggNOG" id="KOG0374">
    <property type="taxonomic scope" value="Eukaryota"/>
</dbReference>
<dbReference type="GeneTree" id="ENSGT00940000153472"/>
<dbReference type="HOGENOM" id="CLU_004962_0_0_1"/>
<dbReference type="InParanoid" id="P11612"/>
<dbReference type="OMA" id="YCGLMNN"/>
<dbReference type="OrthoDB" id="7810113at2759"/>
<dbReference type="PhylomeDB" id="P11612"/>
<dbReference type="BioGRID-ORCS" id="48532">
    <property type="hits" value="0 hits in 3 CRISPR screens"/>
</dbReference>
<dbReference type="GenomeRNAi" id="48532"/>
<dbReference type="PRO" id="PR:P11612"/>
<dbReference type="Proteomes" id="UP000000803">
    <property type="component" value="Chromosome 2R"/>
</dbReference>
<dbReference type="Bgee" id="FBgn0003140">
    <property type="expression patterns" value="Expressed in mid-late elongation-stage spermatid (Drosophila) in testis and 20 other cell types or tissues"/>
</dbReference>
<dbReference type="ExpressionAtlas" id="P11612">
    <property type="expression patterns" value="baseline and differential"/>
</dbReference>
<dbReference type="GO" id="GO:0005737">
    <property type="term" value="C:cytoplasm"/>
    <property type="evidence" value="ECO:0000314"/>
    <property type="project" value="FlyBase"/>
</dbReference>
<dbReference type="GO" id="GO:0005634">
    <property type="term" value="C:nucleus"/>
    <property type="evidence" value="ECO:0000314"/>
    <property type="project" value="FlyBase"/>
</dbReference>
<dbReference type="GO" id="GO:0046872">
    <property type="term" value="F:metal ion binding"/>
    <property type="evidence" value="ECO:0007669"/>
    <property type="project" value="UniProtKB-KW"/>
</dbReference>
<dbReference type="GO" id="GO:0004722">
    <property type="term" value="F:protein serine/threonine phosphatase activity"/>
    <property type="evidence" value="ECO:0000314"/>
    <property type="project" value="FlyBase"/>
</dbReference>
<dbReference type="CDD" id="cd07414">
    <property type="entry name" value="MPP_PP1_PPKL"/>
    <property type="match status" value="1"/>
</dbReference>
<dbReference type="FunFam" id="3.60.21.10:FF:000047">
    <property type="entry name" value="Serine/threonine-protein phosphatase"/>
    <property type="match status" value="1"/>
</dbReference>
<dbReference type="Gene3D" id="3.60.21.10">
    <property type="match status" value="1"/>
</dbReference>
<dbReference type="InterPro" id="IPR004843">
    <property type="entry name" value="Calcineurin-like_PHP_ApaH"/>
</dbReference>
<dbReference type="InterPro" id="IPR029052">
    <property type="entry name" value="Metallo-depent_PP-like"/>
</dbReference>
<dbReference type="InterPro" id="IPR050341">
    <property type="entry name" value="PP1_catalytic_subunit"/>
</dbReference>
<dbReference type="InterPro" id="IPR006186">
    <property type="entry name" value="Ser/Thr-sp_prot-phosphatase"/>
</dbReference>
<dbReference type="PANTHER" id="PTHR11668">
    <property type="entry name" value="SERINE/THREONINE PROTEIN PHOSPHATASE"/>
    <property type="match status" value="1"/>
</dbReference>
<dbReference type="PANTHER" id="PTHR11668:SF300">
    <property type="entry name" value="SERINE_THREONINE-PROTEIN PHOSPHATASE"/>
    <property type="match status" value="1"/>
</dbReference>
<dbReference type="Pfam" id="PF00149">
    <property type="entry name" value="Metallophos"/>
    <property type="match status" value="1"/>
</dbReference>
<dbReference type="PRINTS" id="PR00114">
    <property type="entry name" value="STPHPHTASE"/>
</dbReference>
<dbReference type="SMART" id="SM00156">
    <property type="entry name" value="PP2Ac"/>
    <property type="match status" value="1"/>
</dbReference>
<dbReference type="SUPFAM" id="SSF56300">
    <property type="entry name" value="Metallo-dependent phosphatases"/>
    <property type="match status" value="1"/>
</dbReference>
<dbReference type="PROSITE" id="PS00125">
    <property type="entry name" value="SER_THR_PHOSPHATASE"/>
    <property type="match status" value="1"/>
</dbReference>
<name>PPY_DROME</name>
<evidence type="ECO:0000250" key="1"/>
<evidence type="ECO:0000305" key="2"/>
<organism>
    <name type="scientific">Drosophila melanogaster</name>
    <name type="common">Fruit fly</name>
    <dbReference type="NCBI Taxonomy" id="7227"/>
    <lineage>
        <taxon>Eukaryota</taxon>
        <taxon>Metazoa</taxon>
        <taxon>Ecdysozoa</taxon>
        <taxon>Arthropoda</taxon>
        <taxon>Hexapoda</taxon>
        <taxon>Insecta</taxon>
        <taxon>Pterygota</taxon>
        <taxon>Neoptera</taxon>
        <taxon>Endopterygota</taxon>
        <taxon>Diptera</taxon>
        <taxon>Brachycera</taxon>
        <taxon>Muscomorpha</taxon>
        <taxon>Ephydroidea</taxon>
        <taxon>Drosophilidae</taxon>
        <taxon>Drosophila</taxon>
        <taxon>Sophophora</taxon>
    </lineage>
</organism>
<keyword id="KW-0378">Hydrolase</keyword>
<keyword id="KW-0464">Manganese</keyword>
<keyword id="KW-0479">Metal-binding</keyword>
<keyword id="KW-0904">Protein phosphatase</keyword>
<keyword id="KW-1185">Reference proteome</keyword>
<comment type="catalytic activity">
    <reaction>
        <text>O-phospho-L-seryl-[protein] + H2O = L-seryl-[protein] + phosphate</text>
        <dbReference type="Rhea" id="RHEA:20629"/>
        <dbReference type="Rhea" id="RHEA-COMP:9863"/>
        <dbReference type="Rhea" id="RHEA-COMP:11604"/>
        <dbReference type="ChEBI" id="CHEBI:15377"/>
        <dbReference type="ChEBI" id="CHEBI:29999"/>
        <dbReference type="ChEBI" id="CHEBI:43474"/>
        <dbReference type="ChEBI" id="CHEBI:83421"/>
        <dbReference type="EC" id="3.1.3.16"/>
    </reaction>
</comment>
<comment type="catalytic activity">
    <reaction>
        <text>O-phospho-L-threonyl-[protein] + H2O = L-threonyl-[protein] + phosphate</text>
        <dbReference type="Rhea" id="RHEA:47004"/>
        <dbReference type="Rhea" id="RHEA-COMP:11060"/>
        <dbReference type="Rhea" id="RHEA-COMP:11605"/>
        <dbReference type="ChEBI" id="CHEBI:15377"/>
        <dbReference type="ChEBI" id="CHEBI:30013"/>
        <dbReference type="ChEBI" id="CHEBI:43474"/>
        <dbReference type="ChEBI" id="CHEBI:61977"/>
        <dbReference type="EC" id="3.1.3.16"/>
    </reaction>
</comment>
<comment type="cofactor">
    <cofactor evidence="1">
        <name>Mn(2+)</name>
        <dbReference type="ChEBI" id="CHEBI:29035"/>
    </cofactor>
    <text evidence="1">Binds 2 manganese ions per subunit.</text>
</comment>
<comment type="similarity">
    <text evidence="2">Belongs to the PPP phosphatase family. PP-Y subfamily.</text>
</comment>
<accession>P11612</accession>
<accession>Q26247</accession>
<accession>Q9V8A0</accession>
<reference key="1">
    <citation type="journal article" date="1989" name="FEBS Lett.">
        <title>Molecular cloning and chromosomal localization of a novel Drosophila protein phosphatase.</title>
        <authorList>
            <person name="Dombradi V."/>
            <person name="Axton J.M."/>
            <person name="Glover D.M."/>
            <person name="Cohen P.T.W."/>
        </authorList>
    </citation>
    <scope>NUCLEOTIDE SEQUENCE [MRNA]</scope>
    <source>
        <tissue>Head</tissue>
    </source>
</reference>
<reference key="2">
    <citation type="journal article" date="1990" name="FEBS Lett.">
        <title>Protein serine/threonine phosphatases; an expanding family.</title>
        <authorList>
            <person name="Cohen P.T.W."/>
            <person name="Brewis N.D."/>
            <person name="Hughes V."/>
            <person name="Mann D.J."/>
        </authorList>
    </citation>
    <scope>NUCLEOTIDE SEQUENCE [MRNA]</scope>
</reference>
<reference key="3">
    <citation type="journal article" date="2000" name="Science">
        <title>The genome sequence of Drosophila melanogaster.</title>
        <authorList>
            <person name="Adams M.D."/>
            <person name="Celniker S.E."/>
            <person name="Holt R.A."/>
            <person name="Evans C.A."/>
            <person name="Gocayne J.D."/>
            <person name="Amanatides P.G."/>
            <person name="Scherer S.E."/>
            <person name="Li P.W."/>
            <person name="Hoskins R.A."/>
            <person name="Galle R.F."/>
            <person name="George R.A."/>
            <person name="Lewis S.E."/>
            <person name="Richards S."/>
            <person name="Ashburner M."/>
            <person name="Henderson S.N."/>
            <person name="Sutton G.G."/>
            <person name="Wortman J.R."/>
            <person name="Yandell M.D."/>
            <person name="Zhang Q."/>
            <person name="Chen L.X."/>
            <person name="Brandon R.C."/>
            <person name="Rogers Y.-H.C."/>
            <person name="Blazej R.G."/>
            <person name="Champe M."/>
            <person name="Pfeiffer B.D."/>
            <person name="Wan K.H."/>
            <person name="Doyle C."/>
            <person name="Baxter E.G."/>
            <person name="Helt G."/>
            <person name="Nelson C.R."/>
            <person name="Miklos G.L.G."/>
            <person name="Abril J.F."/>
            <person name="Agbayani A."/>
            <person name="An H.-J."/>
            <person name="Andrews-Pfannkoch C."/>
            <person name="Baldwin D."/>
            <person name="Ballew R.M."/>
            <person name="Basu A."/>
            <person name="Baxendale J."/>
            <person name="Bayraktaroglu L."/>
            <person name="Beasley E.M."/>
            <person name="Beeson K.Y."/>
            <person name="Benos P.V."/>
            <person name="Berman B.P."/>
            <person name="Bhandari D."/>
            <person name="Bolshakov S."/>
            <person name="Borkova D."/>
            <person name="Botchan M.R."/>
            <person name="Bouck J."/>
            <person name="Brokstein P."/>
            <person name="Brottier P."/>
            <person name="Burtis K.C."/>
            <person name="Busam D.A."/>
            <person name="Butler H."/>
            <person name="Cadieu E."/>
            <person name="Center A."/>
            <person name="Chandra I."/>
            <person name="Cherry J.M."/>
            <person name="Cawley S."/>
            <person name="Dahlke C."/>
            <person name="Davenport L.B."/>
            <person name="Davies P."/>
            <person name="de Pablos B."/>
            <person name="Delcher A."/>
            <person name="Deng Z."/>
            <person name="Mays A.D."/>
            <person name="Dew I."/>
            <person name="Dietz S.M."/>
            <person name="Dodson K."/>
            <person name="Doup L.E."/>
            <person name="Downes M."/>
            <person name="Dugan-Rocha S."/>
            <person name="Dunkov B.C."/>
            <person name="Dunn P."/>
            <person name="Durbin K.J."/>
            <person name="Evangelista C.C."/>
            <person name="Ferraz C."/>
            <person name="Ferriera S."/>
            <person name="Fleischmann W."/>
            <person name="Fosler C."/>
            <person name="Gabrielian A.E."/>
            <person name="Garg N.S."/>
            <person name="Gelbart W.M."/>
            <person name="Glasser K."/>
            <person name="Glodek A."/>
            <person name="Gong F."/>
            <person name="Gorrell J.H."/>
            <person name="Gu Z."/>
            <person name="Guan P."/>
            <person name="Harris M."/>
            <person name="Harris N.L."/>
            <person name="Harvey D.A."/>
            <person name="Heiman T.J."/>
            <person name="Hernandez J.R."/>
            <person name="Houck J."/>
            <person name="Hostin D."/>
            <person name="Houston K.A."/>
            <person name="Howland T.J."/>
            <person name="Wei M.-H."/>
            <person name="Ibegwam C."/>
            <person name="Jalali M."/>
            <person name="Kalush F."/>
            <person name="Karpen G.H."/>
            <person name="Ke Z."/>
            <person name="Kennison J.A."/>
            <person name="Ketchum K.A."/>
            <person name="Kimmel B.E."/>
            <person name="Kodira C.D."/>
            <person name="Kraft C.L."/>
            <person name="Kravitz S."/>
            <person name="Kulp D."/>
            <person name="Lai Z."/>
            <person name="Lasko P."/>
            <person name="Lei Y."/>
            <person name="Levitsky A.A."/>
            <person name="Li J.H."/>
            <person name="Li Z."/>
            <person name="Liang Y."/>
            <person name="Lin X."/>
            <person name="Liu X."/>
            <person name="Mattei B."/>
            <person name="McIntosh T.C."/>
            <person name="McLeod M.P."/>
            <person name="McPherson D."/>
            <person name="Merkulov G."/>
            <person name="Milshina N.V."/>
            <person name="Mobarry C."/>
            <person name="Morris J."/>
            <person name="Moshrefi A."/>
            <person name="Mount S.M."/>
            <person name="Moy M."/>
            <person name="Murphy B."/>
            <person name="Murphy L."/>
            <person name="Muzny D.M."/>
            <person name="Nelson D.L."/>
            <person name="Nelson D.R."/>
            <person name="Nelson K.A."/>
            <person name="Nixon K."/>
            <person name="Nusskern D.R."/>
            <person name="Pacleb J.M."/>
            <person name="Palazzolo M."/>
            <person name="Pittman G.S."/>
            <person name="Pan S."/>
            <person name="Pollard J."/>
            <person name="Puri V."/>
            <person name="Reese M.G."/>
            <person name="Reinert K."/>
            <person name="Remington K."/>
            <person name="Saunders R.D.C."/>
            <person name="Scheeler F."/>
            <person name="Shen H."/>
            <person name="Shue B.C."/>
            <person name="Siden-Kiamos I."/>
            <person name="Simpson M."/>
            <person name="Skupski M.P."/>
            <person name="Smith T.J."/>
            <person name="Spier E."/>
            <person name="Spradling A.C."/>
            <person name="Stapleton M."/>
            <person name="Strong R."/>
            <person name="Sun E."/>
            <person name="Svirskas R."/>
            <person name="Tector C."/>
            <person name="Turner R."/>
            <person name="Venter E."/>
            <person name="Wang A.H."/>
            <person name="Wang X."/>
            <person name="Wang Z.-Y."/>
            <person name="Wassarman D.A."/>
            <person name="Weinstock G.M."/>
            <person name="Weissenbach J."/>
            <person name="Williams S.M."/>
            <person name="Woodage T."/>
            <person name="Worley K.C."/>
            <person name="Wu D."/>
            <person name="Yang S."/>
            <person name="Yao Q.A."/>
            <person name="Ye J."/>
            <person name="Yeh R.-F."/>
            <person name="Zaveri J.S."/>
            <person name="Zhan M."/>
            <person name="Zhang G."/>
            <person name="Zhao Q."/>
            <person name="Zheng L."/>
            <person name="Zheng X.H."/>
            <person name="Zhong F.N."/>
            <person name="Zhong W."/>
            <person name="Zhou X."/>
            <person name="Zhu S.C."/>
            <person name="Zhu X."/>
            <person name="Smith H.O."/>
            <person name="Gibbs R.A."/>
            <person name="Myers E.W."/>
            <person name="Rubin G.M."/>
            <person name="Venter J.C."/>
        </authorList>
    </citation>
    <scope>NUCLEOTIDE SEQUENCE [LARGE SCALE GENOMIC DNA]</scope>
    <source>
        <strain>Berkeley</strain>
    </source>
</reference>
<reference key="4">
    <citation type="journal article" date="2002" name="Genome Biol.">
        <title>Annotation of the Drosophila melanogaster euchromatic genome: a systematic review.</title>
        <authorList>
            <person name="Misra S."/>
            <person name="Crosby M.A."/>
            <person name="Mungall C.J."/>
            <person name="Matthews B.B."/>
            <person name="Campbell K.S."/>
            <person name="Hradecky P."/>
            <person name="Huang Y."/>
            <person name="Kaminker J.S."/>
            <person name="Millburn G.H."/>
            <person name="Prochnik S.E."/>
            <person name="Smith C.D."/>
            <person name="Tupy J.L."/>
            <person name="Whitfield E.J."/>
            <person name="Bayraktaroglu L."/>
            <person name="Berman B.P."/>
            <person name="Bettencourt B.R."/>
            <person name="Celniker S.E."/>
            <person name="de Grey A.D.N.J."/>
            <person name="Drysdale R.A."/>
            <person name="Harris N.L."/>
            <person name="Richter J."/>
            <person name="Russo S."/>
            <person name="Schroeder A.J."/>
            <person name="Shu S.Q."/>
            <person name="Stapleton M."/>
            <person name="Yamada C."/>
            <person name="Ashburner M."/>
            <person name="Gelbart W.M."/>
            <person name="Rubin G.M."/>
            <person name="Lewis S.E."/>
        </authorList>
    </citation>
    <scope>GENOME REANNOTATION</scope>
    <source>
        <strain>Berkeley</strain>
    </source>
</reference>
<reference key="5">
    <citation type="journal article" date="2002" name="Genome Biol.">
        <title>A Drosophila full-length cDNA resource.</title>
        <authorList>
            <person name="Stapleton M."/>
            <person name="Carlson J.W."/>
            <person name="Brokstein P."/>
            <person name="Yu C."/>
            <person name="Champe M."/>
            <person name="George R.A."/>
            <person name="Guarin H."/>
            <person name="Kronmiller B."/>
            <person name="Pacleb J.M."/>
            <person name="Park S."/>
            <person name="Wan K.H."/>
            <person name="Rubin G.M."/>
            <person name="Celniker S.E."/>
        </authorList>
    </citation>
    <scope>NUCLEOTIDE SEQUENCE [LARGE SCALE MRNA]</scope>
    <source>
        <strain>Berkeley</strain>
        <tissue>Testis</tissue>
    </source>
</reference>
<reference key="6">
    <citation type="journal article" date="1992" name="FEBS Lett.">
        <title>Polymerase chain reactions using Saccharomyces, Drosophila and human DNA predict a large family of protein serine/threonine phosphatases.</title>
        <authorList>
            <person name="Chen M.X."/>
            <person name="Chen Y.H."/>
            <person name="Cohen P.T.W."/>
        </authorList>
    </citation>
    <scope>NUCLEOTIDE SEQUENCE [GENOMIC DNA] OF 64-87</scope>
</reference>
<protein>
    <recommendedName>
        <fullName>Serine/threonine-protein phosphatase PP-Y</fullName>
        <ecNumber>3.1.3.16</ecNumber>
    </recommendedName>
</protein>
<feature type="chain" id="PRO_0000058889" description="Serine/threonine-protein phosphatase PP-Y">
    <location>
        <begin position="1"/>
        <end position="314"/>
    </location>
</feature>
<feature type="active site" description="Proton donor" evidence="1">
    <location>
        <position position="121"/>
    </location>
</feature>
<feature type="binding site" evidence="1">
    <location>
        <position position="60"/>
    </location>
    <ligand>
        <name>Mn(2+)</name>
        <dbReference type="ChEBI" id="CHEBI:29035"/>
        <label>1</label>
    </ligand>
</feature>
<feature type="binding site" evidence="1">
    <location>
        <position position="62"/>
    </location>
    <ligand>
        <name>Mn(2+)</name>
        <dbReference type="ChEBI" id="CHEBI:29035"/>
        <label>1</label>
    </ligand>
</feature>
<feature type="binding site" evidence="1">
    <location>
        <position position="88"/>
    </location>
    <ligand>
        <name>Mn(2+)</name>
        <dbReference type="ChEBI" id="CHEBI:29035"/>
        <label>1</label>
    </ligand>
</feature>
<feature type="binding site" evidence="1">
    <location>
        <position position="88"/>
    </location>
    <ligand>
        <name>Mn(2+)</name>
        <dbReference type="ChEBI" id="CHEBI:29035"/>
        <label>2</label>
    </ligand>
</feature>
<feature type="binding site" evidence="1">
    <location>
        <position position="120"/>
    </location>
    <ligand>
        <name>Mn(2+)</name>
        <dbReference type="ChEBI" id="CHEBI:29035"/>
        <label>2</label>
    </ligand>
</feature>
<feature type="binding site" evidence="1">
    <location>
        <position position="169"/>
    </location>
    <ligand>
        <name>Mn(2+)</name>
        <dbReference type="ChEBI" id="CHEBI:29035"/>
        <label>2</label>
    </ligand>
</feature>
<feature type="binding site" evidence="1">
    <location>
        <position position="244"/>
    </location>
    <ligand>
        <name>Mn(2+)</name>
        <dbReference type="ChEBI" id="CHEBI:29035"/>
        <label>2</label>
    </ligand>
</feature>
<feature type="sequence conflict" description="In Ref. 6; AAB22467." evidence="2" ref="6">
    <original>T</original>
    <variation>K</variation>
    <location>
        <position position="66"/>
    </location>
</feature>
<feature type="sequence conflict" description="In Ref. 1 and 2." evidence="2" ref="1 2">
    <original>S</original>
    <variation>C</variation>
    <location>
        <position position="123"/>
    </location>
</feature>
<feature type="sequence conflict" description="In Ref. 1 and 2." evidence="2" ref="1 2">
    <original>S</original>
    <variation>N</variation>
    <location>
        <position position="147"/>
    </location>
</feature>